<accession>Q1CNQ3</accession>
<accession>D1Q362</accession>
<protein>
    <recommendedName>
        <fullName evidence="1">Argininosuccinate lyase</fullName>
        <shortName evidence="1">ASAL</shortName>
        <ecNumber evidence="1">4.3.2.1</ecNumber>
    </recommendedName>
    <alternativeName>
        <fullName evidence="1">Arginosuccinase</fullName>
    </alternativeName>
</protein>
<proteinExistence type="inferred from homology"/>
<sequence>MALWGGRFSQAADQRFKQFNDSLRFDYRLAEQDIIGSVAWSKALVTVGVLNADEQQQLEQALSVLLEEVQANPHAILASDAEDIHSWVETKLIDKVGDLGKKLHTGRSRNDQVATDLKLWCKFQITELQTAVQQLQQALVMTAEANQDAVMPGYTHLQRAQPVTFAHWCLAYVEMLSRDESRLQDTLKRLDVSPLGCGALAGTAYAIDREQLAGWLGFASATRNSLDSVSDRDHVLELLSDASIGMVHLSRFAEDLIFFNSGEAAFVDLSDRVTSGSSLMPQKKNPDALELIRGKCGRVQGALTGMTMTLKGLPLAYNKDMQEDKEGLFDALDTWLDCLHMAALVLDGIQVKRPRCKEAAEQGYANATELADYLVAKGVPFREAHHIVGEAVVEAIRQGKALEALALSDLQQFSSVIGDDVYPILALQSCLDKRVAKGGVSPQQVASAIAEAKARLF</sequence>
<name>ARLY_YERPN</name>
<feature type="chain" id="PRO_1000000554" description="Argininosuccinate lyase">
    <location>
        <begin position="1"/>
        <end position="457"/>
    </location>
</feature>
<keyword id="KW-0028">Amino-acid biosynthesis</keyword>
<keyword id="KW-0055">Arginine biosynthesis</keyword>
<keyword id="KW-0963">Cytoplasm</keyword>
<keyword id="KW-0456">Lyase</keyword>
<organism>
    <name type="scientific">Yersinia pestis bv. Antiqua (strain Nepal516)</name>
    <dbReference type="NCBI Taxonomy" id="377628"/>
    <lineage>
        <taxon>Bacteria</taxon>
        <taxon>Pseudomonadati</taxon>
        <taxon>Pseudomonadota</taxon>
        <taxon>Gammaproteobacteria</taxon>
        <taxon>Enterobacterales</taxon>
        <taxon>Yersiniaceae</taxon>
        <taxon>Yersinia</taxon>
    </lineage>
</organism>
<comment type="catalytic activity">
    <reaction evidence="1">
        <text>2-(N(omega)-L-arginino)succinate = fumarate + L-arginine</text>
        <dbReference type="Rhea" id="RHEA:24020"/>
        <dbReference type="ChEBI" id="CHEBI:29806"/>
        <dbReference type="ChEBI" id="CHEBI:32682"/>
        <dbReference type="ChEBI" id="CHEBI:57472"/>
        <dbReference type="EC" id="4.3.2.1"/>
    </reaction>
</comment>
<comment type="pathway">
    <text evidence="1">Amino-acid biosynthesis; L-arginine biosynthesis; L-arginine from L-ornithine and carbamoyl phosphate: step 3/3.</text>
</comment>
<comment type="subcellular location">
    <subcellularLocation>
        <location evidence="1">Cytoplasm</location>
    </subcellularLocation>
</comment>
<comment type="similarity">
    <text evidence="1">Belongs to the lyase 1 family. Argininosuccinate lyase subfamily.</text>
</comment>
<gene>
    <name evidence="1" type="primary">argH</name>
    <name type="ordered locus">YPN_0044</name>
    <name type="ORF">YP516_4582</name>
</gene>
<evidence type="ECO:0000255" key="1">
    <source>
        <dbReference type="HAMAP-Rule" id="MF_00006"/>
    </source>
</evidence>
<reference key="1">
    <citation type="journal article" date="2006" name="J. Bacteriol.">
        <title>Complete genome sequence of Yersinia pestis strains Antiqua and Nepal516: evidence of gene reduction in an emerging pathogen.</title>
        <authorList>
            <person name="Chain P.S.G."/>
            <person name="Hu P."/>
            <person name="Malfatti S.A."/>
            <person name="Radnedge L."/>
            <person name="Larimer F."/>
            <person name="Vergez L.M."/>
            <person name="Worsham P."/>
            <person name="Chu M.C."/>
            <person name="Andersen G.L."/>
        </authorList>
    </citation>
    <scope>NUCLEOTIDE SEQUENCE [LARGE SCALE GENOMIC DNA]</scope>
    <source>
        <strain>Nepal516</strain>
    </source>
</reference>
<reference key="2">
    <citation type="submission" date="2009-04" db="EMBL/GenBank/DDBJ databases">
        <title>Yersinia pestis Nepal516A whole genome shotgun sequencing project.</title>
        <authorList>
            <person name="Plunkett G. III"/>
            <person name="Anderson B.D."/>
            <person name="Baumler D.J."/>
            <person name="Burland V."/>
            <person name="Cabot E.L."/>
            <person name="Glasner J.D."/>
            <person name="Mau B."/>
            <person name="Neeno-Eckwall E."/>
            <person name="Perna N.T."/>
            <person name="Munk A.C."/>
            <person name="Tapia R."/>
            <person name="Green L.D."/>
            <person name="Rogers Y.C."/>
            <person name="Detter J.C."/>
            <person name="Bruce D.C."/>
            <person name="Brettin T.S."/>
        </authorList>
    </citation>
    <scope>NUCLEOTIDE SEQUENCE [LARGE SCALE GENOMIC DNA]</scope>
    <source>
        <strain>Nepal516</strain>
    </source>
</reference>
<dbReference type="EC" id="4.3.2.1" evidence="1"/>
<dbReference type="EMBL" id="CP000305">
    <property type="protein sequence ID" value="ABG16377.1"/>
    <property type="molecule type" value="Genomic_DNA"/>
</dbReference>
<dbReference type="EMBL" id="ACNQ01000019">
    <property type="protein sequence ID" value="EEO74965.1"/>
    <property type="molecule type" value="Genomic_DNA"/>
</dbReference>
<dbReference type="RefSeq" id="WP_002209487.1">
    <property type="nucleotide sequence ID" value="NZ_ACNQ01000019.1"/>
</dbReference>
<dbReference type="SMR" id="Q1CNQ3"/>
<dbReference type="GeneID" id="57974777"/>
<dbReference type="KEGG" id="ypn:YPN_0044"/>
<dbReference type="HOGENOM" id="CLU_027272_2_3_6"/>
<dbReference type="UniPathway" id="UPA00068">
    <property type="reaction ID" value="UER00114"/>
</dbReference>
<dbReference type="Proteomes" id="UP000008936">
    <property type="component" value="Chromosome"/>
</dbReference>
<dbReference type="GO" id="GO:0005829">
    <property type="term" value="C:cytosol"/>
    <property type="evidence" value="ECO:0007669"/>
    <property type="project" value="TreeGrafter"/>
</dbReference>
<dbReference type="GO" id="GO:0004056">
    <property type="term" value="F:argininosuccinate lyase activity"/>
    <property type="evidence" value="ECO:0007669"/>
    <property type="project" value="UniProtKB-UniRule"/>
</dbReference>
<dbReference type="GO" id="GO:0042450">
    <property type="term" value="P:arginine biosynthetic process via ornithine"/>
    <property type="evidence" value="ECO:0007669"/>
    <property type="project" value="InterPro"/>
</dbReference>
<dbReference type="GO" id="GO:0006526">
    <property type="term" value="P:L-arginine biosynthetic process"/>
    <property type="evidence" value="ECO:0007669"/>
    <property type="project" value="UniProtKB-UniRule"/>
</dbReference>
<dbReference type="CDD" id="cd01359">
    <property type="entry name" value="Argininosuccinate_lyase"/>
    <property type="match status" value="1"/>
</dbReference>
<dbReference type="FunFam" id="1.10.275.10:FF:000004">
    <property type="entry name" value="Argininosuccinate lyase"/>
    <property type="match status" value="1"/>
</dbReference>
<dbReference type="FunFam" id="1.10.40.30:FF:000001">
    <property type="entry name" value="Argininosuccinate lyase"/>
    <property type="match status" value="1"/>
</dbReference>
<dbReference type="FunFam" id="1.20.200.10:FF:000006">
    <property type="entry name" value="Argininosuccinate lyase"/>
    <property type="match status" value="1"/>
</dbReference>
<dbReference type="Gene3D" id="1.10.40.30">
    <property type="entry name" value="Fumarase/aspartase (C-terminal domain)"/>
    <property type="match status" value="1"/>
</dbReference>
<dbReference type="Gene3D" id="1.20.200.10">
    <property type="entry name" value="Fumarase/aspartase (Central domain)"/>
    <property type="match status" value="1"/>
</dbReference>
<dbReference type="Gene3D" id="1.10.275.10">
    <property type="entry name" value="Fumarase/aspartase (N-terminal domain)"/>
    <property type="match status" value="1"/>
</dbReference>
<dbReference type="HAMAP" id="MF_00006">
    <property type="entry name" value="Arg_succ_lyase"/>
    <property type="match status" value="1"/>
</dbReference>
<dbReference type="InterPro" id="IPR029419">
    <property type="entry name" value="Arg_succ_lyase_C"/>
</dbReference>
<dbReference type="InterPro" id="IPR009049">
    <property type="entry name" value="Argininosuccinate_lyase"/>
</dbReference>
<dbReference type="InterPro" id="IPR024083">
    <property type="entry name" value="Fumarase/histidase_N"/>
</dbReference>
<dbReference type="InterPro" id="IPR020557">
    <property type="entry name" value="Fumarate_lyase_CS"/>
</dbReference>
<dbReference type="InterPro" id="IPR000362">
    <property type="entry name" value="Fumarate_lyase_fam"/>
</dbReference>
<dbReference type="InterPro" id="IPR022761">
    <property type="entry name" value="Fumarate_lyase_N"/>
</dbReference>
<dbReference type="InterPro" id="IPR008948">
    <property type="entry name" value="L-Aspartase-like"/>
</dbReference>
<dbReference type="NCBIfam" id="TIGR00838">
    <property type="entry name" value="argH"/>
    <property type="match status" value="1"/>
</dbReference>
<dbReference type="NCBIfam" id="NF008964">
    <property type="entry name" value="PRK12308.1"/>
    <property type="match status" value="1"/>
</dbReference>
<dbReference type="PANTHER" id="PTHR43814">
    <property type="entry name" value="ARGININOSUCCINATE LYASE"/>
    <property type="match status" value="1"/>
</dbReference>
<dbReference type="PANTHER" id="PTHR43814:SF1">
    <property type="entry name" value="ARGININOSUCCINATE LYASE"/>
    <property type="match status" value="1"/>
</dbReference>
<dbReference type="Pfam" id="PF14698">
    <property type="entry name" value="ASL_C2"/>
    <property type="match status" value="1"/>
</dbReference>
<dbReference type="Pfam" id="PF00206">
    <property type="entry name" value="Lyase_1"/>
    <property type="match status" value="1"/>
</dbReference>
<dbReference type="PRINTS" id="PR00145">
    <property type="entry name" value="ARGSUCLYASE"/>
</dbReference>
<dbReference type="PRINTS" id="PR00149">
    <property type="entry name" value="FUMRATELYASE"/>
</dbReference>
<dbReference type="SUPFAM" id="SSF48557">
    <property type="entry name" value="L-aspartase-like"/>
    <property type="match status" value="1"/>
</dbReference>
<dbReference type="PROSITE" id="PS00163">
    <property type="entry name" value="FUMARATE_LYASES"/>
    <property type="match status" value="1"/>
</dbReference>